<accession>Q9JKB1</accession>
<accession>Q9EQX7</accession>
<proteinExistence type="evidence at protein level"/>
<dbReference type="EC" id="3.4.19.12" evidence="2"/>
<dbReference type="EMBL" id="AF247358">
    <property type="protein sequence ID" value="AAF64193.1"/>
    <property type="molecule type" value="mRNA"/>
</dbReference>
<dbReference type="EMBL" id="AB033370">
    <property type="protein sequence ID" value="BAB20094.1"/>
    <property type="molecule type" value="mRNA"/>
</dbReference>
<dbReference type="EMBL" id="BC048481">
    <property type="protein sequence ID" value="AAH48481.1"/>
    <property type="molecule type" value="mRNA"/>
</dbReference>
<dbReference type="CCDS" id="CCDS27313.1"/>
<dbReference type="PIR" id="JC7688">
    <property type="entry name" value="JC7688"/>
</dbReference>
<dbReference type="RefSeq" id="NP_057932.2">
    <property type="nucleotide sequence ID" value="NM_016723.3"/>
</dbReference>
<dbReference type="BMRB" id="Q9JKB1"/>
<dbReference type="SMR" id="Q9JKB1"/>
<dbReference type="BioGRID" id="206165">
    <property type="interactions" value="10"/>
</dbReference>
<dbReference type="FunCoup" id="Q9JKB1">
    <property type="interactions" value="2634"/>
</dbReference>
<dbReference type="IntAct" id="Q9JKB1">
    <property type="interactions" value="2"/>
</dbReference>
<dbReference type="MINT" id="Q9JKB1"/>
<dbReference type="STRING" id="10090.ENSMUSP00000002289"/>
<dbReference type="BindingDB" id="Q9JKB1"/>
<dbReference type="MEROPS" id="C12.003"/>
<dbReference type="iPTMnet" id="Q9JKB1"/>
<dbReference type="PhosphoSitePlus" id="Q9JKB1"/>
<dbReference type="SwissPalm" id="Q9JKB1"/>
<dbReference type="REPRODUCTION-2DPAGE" id="IPI00311369"/>
<dbReference type="REPRODUCTION-2DPAGE" id="Q9JKB1"/>
<dbReference type="jPOST" id="Q9JKB1"/>
<dbReference type="PaxDb" id="10090-ENSMUSP00000002289"/>
<dbReference type="PeptideAtlas" id="Q9JKB1"/>
<dbReference type="ProteomicsDB" id="298190"/>
<dbReference type="Pumba" id="Q9JKB1"/>
<dbReference type="DNASU" id="50933"/>
<dbReference type="Ensembl" id="ENSMUST00000002289.8">
    <property type="protein sequence ID" value="ENSMUSP00000002289.6"/>
    <property type="gene ID" value="ENSMUSG00000022111.10"/>
</dbReference>
<dbReference type="GeneID" id="50933"/>
<dbReference type="KEGG" id="mmu:50933"/>
<dbReference type="UCSC" id="uc007uvw.1">
    <property type="organism name" value="mouse"/>
</dbReference>
<dbReference type="AGR" id="MGI:1355274"/>
<dbReference type="CTD" id="7347"/>
<dbReference type="MGI" id="MGI:1355274">
    <property type="gene designation" value="Uchl3"/>
</dbReference>
<dbReference type="VEuPathDB" id="HostDB:ENSMUSG00000022111"/>
<dbReference type="eggNOG" id="KOG1415">
    <property type="taxonomic scope" value="Eukaryota"/>
</dbReference>
<dbReference type="GeneTree" id="ENSGT00940000154925"/>
<dbReference type="HOGENOM" id="CLU_054406_1_1_1"/>
<dbReference type="InParanoid" id="Q9JKB1"/>
<dbReference type="OMA" id="IDLHYVC"/>
<dbReference type="PhylomeDB" id="Q9JKB1"/>
<dbReference type="TreeFam" id="TF316166"/>
<dbReference type="BRENDA" id="3.4.19.12">
    <property type="organism ID" value="3474"/>
</dbReference>
<dbReference type="Reactome" id="R-MMU-5689603">
    <property type="pathway name" value="UCH proteinases"/>
</dbReference>
<dbReference type="Reactome" id="R-MMU-8866652">
    <property type="pathway name" value="Synthesis of active ubiquitin: roles of E1 and E2 enzymes"/>
</dbReference>
<dbReference type="Reactome" id="R-MMU-8951664">
    <property type="pathway name" value="Neddylation"/>
</dbReference>
<dbReference type="BioGRID-ORCS" id="50933">
    <property type="hits" value="1 hit in 77 CRISPR screens"/>
</dbReference>
<dbReference type="ChiTaRS" id="Uchl3">
    <property type="organism name" value="mouse"/>
</dbReference>
<dbReference type="PRO" id="PR:Q9JKB1"/>
<dbReference type="Proteomes" id="UP000000589">
    <property type="component" value="Chromosome 14"/>
</dbReference>
<dbReference type="RNAct" id="Q9JKB1">
    <property type="molecule type" value="protein"/>
</dbReference>
<dbReference type="Bgee" id="ENSMUSG00000022111">
    <property type="expression patterns" value="Expressed in heart left ventricle and 76 other cell types or tissues"/>
</dbReference>
<dbReference type="ExpressionAtlas" id="Q9JKB1">
    <property type="expression patterns" value="baseline and differential"/>
</dbReference>
<dbReference type="GO" id="GO:0005737">
    <property type="term" value="C:cytoplasm"/>
    <property type="evidence" value="ECO:0007669"/>
    <property type="project" value="UniProtKB-SubCell"/>
</dbReference>
<dbReference type="GO" id="GO:0004843">
    <property type="term" value="F:cysteine-type deubiquitinase activity"/>
    <property type="evidence" value="ECO:0007669"/>
    <property type="project" value="UniProtKB-EC"/>
</dbReference>
<dbReference type="GO" id="GO:0101005">
    <property type="term" value="F:deubiquitinase activity"/>
    <property type="evidence" value="ECO:0000314"/>
    <property type="project" value="MGI"/>
</dbReference>
<dbReference type="GO" id="GO:0008233">
    <property type="term" value="F:peptidase activity"/>
    <property type="evidence" value="ECO:0000314"/>
    <property type="project" value="UniProtKB"/>
</dbReference>
<dbReference type="GO" id="GO:0007628">
    <property type="term" value="P:adult walking behavior"/>
    <property type="evidence" value="ECO:0000316"/>
    <property type="project" value="MGI"/>
</dbReference>
<dbReference type="GO" id="GO:0032869">
    <property type="term" value="P:cellular response to insulin stimulus"/>
    <property type="evidence" value="ECO:0000314"/>
    <property type="project" value="UniProtKB"/>
</dbReference>
<dbReference type="GO" id="GO:0042755">
    <property type="term" value="P:eating behavior"/>
    <property type="evidence" value="ECO:0000316"/>
    <property type="project" value="MGI"/>
</dbReference>
<dbReference type="GO" id="GO:0045600">
    <property type="term" value="P:positive regulation of fat cell differentiation"/>
    <property type="evidence" value="ECO:0000314"/>
    <property type="project" value="UniProtKB"/>
</dbReference>
<dbReference type="GO" id="GO:0030163">
    <property type="term" value="P:protein catabolic process"/>
    <property type="evidence" value="ECO:0000314"/>
    <property type="project" value="UniProtKB"/>
</dbReference>
<dbReference type="GO" id="GO:0016579">
    <property type="term" value="P:protein deubiquitination"/>
    <property type="evidence" value="ECO:0000314"/>
    <property type="project" value="MGI"/>
</dbReference>
<dbReference type="GO" id="GO:0060041">
    <property type="term" value="P:retina development in camera-type eye"/>
    <property type="evidence" value="ECO:0000315"/>
    <property type="project" value="MGI"/>
</dbReference>
<dbReference type="GO" id="GO:0006511">
    <property type="term" value="P:ubiquitin-dependent protein catabolic process"/>
    <property type="evidence" value="ECO:0007669"/>
    <property type="project" value="InterPro"/>
</dbReference>
<dbReference type="CDD" id="cd09616">
    <property type="entry name" value="Peptidase_C12_UCH_L1_L3"/>
    <property type="match status" value="1"/>
</dbReference>
<dbReference type="FunFam" id="3.40.532.10:FF:000005">
    <property type="entry name" value="Ubiquitin carboxyl-terminal hydrolase"/>
    <property type="match status" value="1"/>
</dbReference>
<dbReference type="Gene3D" id="3.40.532.10">
    <property type="entry name" value="Peptidase C12, ubiquitin carboxyl-terminal hydrolase"/>
    <property type="match status" value="1"/>
</dbReference>
<dbReference type="InterPro" id="IPR038765">
    <property type="entry name" value="Papain-like_cys_pep_sf"/>
</dbReference>
<dbReference type="InterPro" id="IPR001578">
    <property type="entry name" value="Peptidase_C12_UCH"/>
</dbReference>
<dbReference type="InterPro" id="IPR036959">
    <property type="entry name" value="Peptidase_C12_UCH_sf"/>
</dbReference>
<dbReference type="InterPro" id="IPR057254">
    <property type="entry name" value="UCH_AS"/>
</dbReference>
<dbReference type="PANTHER" id="PTHR10589">
    <property type="entry name" value="UBIQUITIN CARBOXYL-TERMINAL HYDROLASE"/>
    <property type="match status" value="1"/>
</dbReference>
<dbReference type="PANTHER" id="PTHR10589:SF24">
    <property type="entry name" value="UBIQUITIN CARBOXYL-TERMINAL HYDROLASE ISOZYME L3"/>
    <property type="match status" value="1"/>
</dbReference>
<dbReference type="Pfam" id="PF01088">
    <property type="entry name" value="Peptidase_C12"/>
    <property type="match status" value="1"/>
</dbReference>
<dbReference type="PRINTS" id="PR00707">
    <property type="entry name" value="UBCTHYDRLASE"/>
</dbReference>
<dbReference type="SUPFAM" id="SSF54001">
    <property type="entry name" value="Cysteine proteinases"/>
    <property type="match status" value="1"/>
</dbReference>
<dbReference type="PROSITE" id="PS00140">
    <property type="entry name" value="UCH_1"/>
    <property type="match status" value="1"/>
</dbReference>
<dbReference type="PROSITE" id="PS52048">
    <property type="entry name" value="UCH_DOMAIN"/>
    <property type="match status" value="1"/>
</dbReference>
<organism>
    <name type="scientific">Mus musculus</name>
    <name type="common">Mouse</name>
    <dbReference type="NCBI Taxonomy" id="10090"/>
    <lineage>
        <taxon>Eukaryota</taxon>
        <taxon>Metazoa</taxon>
        <taxon>Chordata</taxon>
        <taxon>Craniata</taxon>
        <taxon>Vertebrata</taxon>
        <taxon>Euteleostomi</taxon>
        <taxon>Mammalia</taxon>
        <taxon>Eutheria</taxon>
        <taxon>Euarchontoglires</taxon>
        <taxon>Glires</taxon>
        <taxon>Rodentia</taxon>
        <taxon>Myomorpha</taxon>
        <taxon>Muroidea</taxon>
        <taxon>Muridae</taxon>
        <taxon>Murinae</taxon>
        <taxon>Mus</taxon>
        <taxon>Mus</taxon>
    </lineage>
</organism>
<gene>
    <name type="primary">Uchl3</name>
</gene>
<evidence type="ECO:0000250" key="1"/>
<evidence type="ECO:0000250" key="2">
    <source>
        <dbReference type="UniProtKB" id="P15374"/>
    </source>
</evidence>
<evidence type="ECO:0000255" key="3">
    <source>
        <dbReference type="PROSITE-ProRule" id="PRU01393"/>
    </source>
</evidence>
<evidence type="ECO:0000255" key="4">
    <source>
        <dbReference type="PROSITE-ProRule" id="PRU10091"/>
    </source>
</evidence>
<evidence type="ECO:0000269" key="5">
    <source>
    </source>
</evidence>
<evidence type="ECO:0000269" key="6">
    <source>
    </source>
</evidence>
<evidence type="ECO:0000269" key="7">
    <source>
    </source>
</evidence>
<evidence type="ECO:0000269" key="8">
    <source>
    </source>
</evidence>
<evidence type="ECO:0000269" key="9">
    <source>
    </source>
</evidence>
<evidence type="ECO:0000269" key="10">
    <source>
    </source>
</evidence>
<evidence type="ECO:0000269" key="11">
    <source>
    </source>
</evidence>
<evidence type="ECO:0000269" key="12">
    <source>
    </source>
</evidence>
<evidence type="ECO:0000269" key="13">
    <source>
    </source>
</evidence>
<evidence type="ECO:0000269" key="14">
    <source>
    </source>
</evidence>
<evidence type="ECO:0000305" key="15"/>
<reference key="1">
    <citation type="journal article" date="2000" name="Mol. Cell. Biol.">
        <title>Expression and functional analysis of Uch-L3 during mouse development.</title>
        <authorList>
            <person name="Kurihara L.J."/>
            <person name="Semenova E."/>
            <person name="Levorse J.M."/>
            <person name="Tilghman S.M."/>
        </authorList>
    </citation>
    <scope>NUCLEOTIDE SEQUENCE [MRNA]</scope>
    <scope>DEVELOPMENTAL STAGE</scope>
    <scope>TISSUE SPECIFICITY</scope>
    <source>
        <strain>Swiss Webster / NIH</strain>
    </source>
</reference>
<reference key="2">
    <citation type="journal article" date="2001" name="Biochem. Biophys. Res. Commun.">
        <title>Cloning, expression, and mapping of a mouse gene, Uchl4, highly homologous to human and mouse Uchl3.</title>
        <authorList>
            <person name="Osawa Y."/>
            <person name="Wang Y.-L."/>
            <person name="Osaka H."/>
            <person name="Aoki S."/>
            <person name="Wada K."/>
        </authorList>
    </citation>
    <scope>NUCLEOTIDE SEQUENCE [MRNA]</scope>
    <scope>SUBCELLULAR LOCATION</scope>
    <scope>TISSUE SPECIFICITY</scope>
    <source>
        <strain>C57BL/6J</strain>
        <tissue>Kidney</tissue>
        <tissue>Liver</tissue>
    </source>
</reference>
<reference key="3">
    <citation type="journal article" date="2004" name="Genome Res.">
        <title>The status, quality, and expansion of the NIH full-length cDNA project: the Mammalian Gene Collection (MGC).</title>
        <authorList>
            <consortium name="The MGC Project Team"/>
        </authorList>
    </citation>
    <scope>NUCLEOTIDE SEQUENCE [LARGE SCALE MRNA]</scope>
    <source>
        <tissue>Testis</tissue>
    </source>
</reference>
<reference key="4">
    <citation type="journal article" date="1998" name="Biochem. Biophys. Res. Commun.">
        <title>Cleavage of the C-terminus of NEDD8 by UCH-L3.</title>
        <authorList>
            <person name="Wada H."/>
            <person name="Kito K."/>
            <person name="Caskey L.S."/>
            <person name="Yeh E.T.H."/>
            <person name="Kamitani T."/>
        </authorList>
    </citation>
    <scope>DEVELOPMENTAL STAGE</scope>
</reference>
<reference key="5">
    <citation type="journal article" date="2005" name="Hippocampus">
        <title>Ubiquitin C-terminal hydrolase L3 (Uchl3) is involved in working memory.</title>
        <authorList>
            <person name="Wood M.A."/>
            <person name="Kaplan M.P."/>
            <person name="Brensinger C.M."/>
            <person name="Guo W."/>
            <person name="Abel T."/>
        </authorList>
    </citation>
    <scope>FUNCTION</scope>
    <scope>DISRUPTION PHENOTYPE</scope>
</reference>
<reference key="6">
    <citation type="journal article" date="2006" name="Am. J. Pathol.">
        <title>Photoreceptor cell apoptosis in the retinal degeneration of Uchl3-deficient mice.</title>
        <authorList>
            <person name="Sano Y."/>
            <person name="Furuta A."/>
            <person name="Setsuie R."/>
            <person name="Kikuchi H."/>
            <person name="Wang Y.L."/>
            <person name="Sakurai M."/>
            <person name="Kwon J."/>
            <person name="Noda M."/>
            <person name="Wada K."/>
        </authorList>
    </citation>
    <scope>DISRUPTION PHENOTYPE</scope>
    <scope>FUNCTION</scope>
    <scope>TISSUE SPECIFICITY</scope>
</reference>
<reference key="7">
    <citation type="journal article" date="2007" name="Exp. Anim.">
        <title>The new function of two ubiquitin C-terminal hydrolase isozymes as reciprocal modulators of germ cell apoptosis.</title>
        <authorList>
            <person name="Kwon J."/>
        </authorList>
    </citation>
    <scope>DISRUPTION PHENOTYPE</scope>
    <scope>FUNCTION</scope>
    <scope>TISSUE SPECIFICITY</scope>
</reference>
<reference key="8">
    <citation type="journal article" date="2007" name="J. Biol. Chem.">
        <title>The deubiquitinating enzyme UCH-L3 regulates the apical membrane recycling of the epithelial sodium channel.</title>
        <authorList>
            <person name="Butterworth M.B."/>
            <person name="Edinger R.S."/>
            <person name="Ovaa H."/>
            <person name="Burg D."/>
            <person name="Johnson J.P."/>
            <person name="Frizzell R.A."/>
        </authorList>
    </citation>
    <scope>FUNCTION IN ENAC RECYCLING</scope>
    <scope>SUBCELLULAR LOCATION</scope>
</reference>
<reference key="9">
    <citation type="journal article" date="2009" name="Endocrinology">
        <title>Ubiquitin carboxyl-terminal hydrolase l3 promotes insulin signaling and adipogenesis.</title>
        <authorList>
            <person name="Suzuki M."/>
            <person name="Setsuie R."/>
            <person name="Wada K."/>
        </authorList>
    </citation>
    <scope>DISRUPTION PHENOTYPE</scope>
    <scope>FUNCTION IN ADIPOGENESIS AND INSULIN SIGNALING</scope>
    <scope>MUTAGENESIS OF CYS-95</scope>
</reference>
<reference key="10">
    <citation type="journal article" date="2010" name="Cell">
        <title>A tissue-specific atlas of mouse protein phosphorylation and expression.</title>
        <authorList>
            <person name="Huttlin E.L."/>
            <person name="Jedrychowski M.P."/>
            <person name="Elias J.E."/>
            <person name="Goswami T."/>
            <person name="Rad R."/>
            <person name="Beausoleil S.A."/>
            <person name="Villen J."/>
            <person name="Haas W."/>
            <person name="Sowa M.E."/>
            <person name="Gygi S.P."/>
        </authorList>
    </citation>
    <scope>IDENTIFICATION BY MASS SPECTROMETRY [LARGE SCALE ANALYSIS]</scope>
    <source>
        <tissue>Brain</tissue>
        <tissue>Brown adipose tissue</tissue>
        <tissue>Heart</tissue>
        <tissue>Kidney</tissue>
        <tissue>Liver</tissue>
        <tissue>Lung</tissue>
        <tissue>Pancreas</tissue>
        <tissue>Spleen</tissue>
        <tissue>Testis</tissue>
    </source>
</reference>
<reference key="11">
    <citation type="journal article" date="2010" name="Neurochem. Int.">
        <title>Skeletal muscles of Uchl3 knockout mice show polyubiquitinated protein accumulation and stress responses.</title>
        <authorList>
            <person name="Setsuie R."/>
            <person name="Suzuki M."/>
            <person name="Tsuchiya Y."/>
            <person name="Wada K."/>
        </authorList>
    </citation>
    <scope>DISRUPTION PHENOTYPE</scope>
</reference>
<reference key="12">
    <citation type="journal article" date="2011" name="FEBS Lett.">
        <title>Mutant ubiquitin (UBB(+1)) associated with neurodegenerative disorders is hydrolyzed by ubiquitin C-terminal hydrolase L3 (UCH-L3).</title>
        <authorList>
            <person name="Dennissen F.J."/>
            <person name="Kholod N."/>
            <person name="Hermes D.J."/>
            <person name="Kemmerling N."/>
            <person name="Steinbusch H.W."/>
            <person name="Dantuma N.P."/>
            <person name="van Leeuwen F.W."/>
        </authorList>
    </citation>
    <scope>FUNCTION</scope>
</reference>
<keyword id="KW-0963">Cytoplasm</keyword>
<keyword id="KW-0378">Hydrolase</keyword>
<keyword id="KW-0597">Phosphoprotein</keyword>
<keyword id="KW-0645">Protease</keyword>
<keyword id="KW-1185">Reference proteome</keyword>
<keyword id="KW-0788">Thiol protease</keyword>
<keyword id="KW-0833">Ubl conjugation pathway</keyword>
<sequence>MEGQRWLPLEANPEVTNQFLKQLGLHPNWQFVDVYGMEPELLSMVPRPVCAVLLLFPITEKYEVFRTEEEEKIKSQGQDVTSSVYFMKQTISNACGTIGLIHAIANNKDKMHFESGSTLKKFLEESVSMSPEERAKFLENYDAIRVTHETSAHEGQTEAPSIDEKVDLHFIALVHVDGHLYELDGRKPFPINHGKTSDETLLEDAIEVCKKFMERDPDELRFNAIALSAA</sequence>
<name>UCHL3_MOUSE</name>
<feature type="chain" id="PRO_0000211062" description="Ubiquitin carboxyl-terminal hydrolase isozyme L3">
    <location>
        <begin position="1"/>
        <end position="230"/>
    </location>
</feature>
<feature type="domain" description="UCH catalytic" evidence="3">
    <location>
        <begin position="5"/>
        <end position="229"/>
    </location>
</feature>
<feature type="region of interest" description="Interaction with ubiquitin" evidence="2">
    <location>
        <begin position="8"/>
        <end position="13"/>
    </location>
</feature>
<feature type="region of interest" description="Interaction with ubiquitin. Crossover loop which restricts access of large ubiquitin adducts to the active site" evidence="2">
    <location>
        <begin position="152"/>
        <end position="159"/>
    </location>
</feature>
<feature type="region of interest" description="Interaction with ubiquitin" evidence="2">
    <location>
        <begin position="219"/>
        <end position="224"/>
    </location>
</feature>
<feature type="active site" description="Nucleophile" evidence="3 4">
    <location>
        <position position="95"/>
    </location>
</feature>
<feature type="active site" description="Proton donor" evidence="3">
    <location>
        <position position="169"/>
    </location>
</feature>
<feature type="site" description="Transition state stabilizer" evidence="3">
    <location>
        <position position="89"/>
    </location>
</feature>
<feature type="site" description="Important for enzyme activity" evidence="3">
    <location>
        <position position="184"/>
    </location>
</feature>
<feature type="modified residue" description="Phosphoserine" evidence="2">
    <location>
        <position position="130"/>
    </location>
</feature>
<feature type="mutagenesis site" description="No increase in phosphorylation of AKT1, FOXO1 and INSR. No increased expression of SLC2A1, FABP4 nor ADIPOQ. Impaired formation of large lipid droplets." evidence="11">
    <original>C</original>
    <variation>S</variation>
    <location>
        <position position="95"/>
    </location>
</feature>
<feature type="sequence conflict" description="In Ref. 1; AAF64193." evidence="15" ref="1">
    <original>AIE</original>
    <variation>VIK</variation>
    <location>
        <begin position="205"/>
        <end position="207"/>
    </location>
</feature>
<protein>
    <recommendedName>
        <fullName>Ubiquitin carboxyl-terminal hydrolase isozyme L3</fullName>
        <shortName>UCH-L3</shortName>
        <ecNumber evidence="2">3.4.19.12</ecNumber>
    </recommendedName>
    <alternativeName>
        <fullName>Ubiquitin thioesterase L3</fullName>
    </alternativeName>
</protein>
<comment type="function">
    <text evidence="7 8 9 10 11 13">Deubiquitinating enzyme (DUB) that controls levels of cellular ubiquitin through processing of ubiquitin precursors and ubiquitinated proteins. Thiol protease that recognizes and hydrolyzes a peptide bond at the C-terminal glycine of either ubiquitin or NEDD8. Has a 10-fold preference for Arg and Lys at position P3'', and exhibits a preference towards 'Lys-48'-linked ubiquitin chains. Deubiquitinates ENAC in apical compartments, thereby regulating apical membrane recycling. Indirectly increases the phosphorylation of IGFIR, AKT and FOXO1 and promotes insulin-signaling and insulin-induced adipogenesis. Required for stress-response retinal, skeletal muscle and germ cell maintenance. May be involved in working memory. Can hydrolyze UBB(+1), a mutated form of ubiquitin which is not effectively degraded by the proteasome.</text>
</comment>
<comment type="catalytic activity">
    <reaction evidence="2">
        <text>Thiol-dependent hydrolysis of ester, thioester, amide, peptide and isopeptide bonds formed by the C-terminal Gly of ubiquitin (a 76-residue protein attached to proteins as an intracellular targeting signal).</text>
        <dbReference type="EC" id="3.4.19.12"/>
    </reaction>
</comment>
<comment type="activity regulation">
    <text evidence="1">Inhibited by monoubiquitin and diubiquitin.</text>
</comment>
<comment type="subunit">
    <text evidence="1">Preferentially binds diubiquitin; the interaction does not hydrolyze diubiquitin but, in vitro, inhibits the hydrolyzing activity on other substrates.</text>
</comment>
<comment type="subcellular location">
    <subcellularLocation>
        <location evidence="6 10">Cytoplasm</location>
    </subcellularLocation>
</comment>
<comment type="tissue specificity">
    <text evidence="5 6 8 9">Ubiquitously expressed, with highest levels in brain, liver, heart, thymus, kidney and testis. Highly expressed in the cauda epididymidis, in meiotic pachytene spermatocytes and post-meiotic spematids. In the retina, enriched in the photoreceptor inner segment.</text>
</comment>
<comment type="developmental stage">
    <text evidence="5 14">Expressed at 8.5 dpc in structures required for skeletal patterning. Highly expressed at 11 dpc, and decreases markedly from 15 dpc.</text>
</comment>
<comment type="disruption phenotype">
    <text evidence="7 8 9 11 12">Mice have no developmental defects, are fertile, and show normal T-cell differentiation. They have normal anxiety, locomotor behavior, motor function and synaptic transmission, but show defects in spatial learning and working memory. Exhibit stress-related effects with profound apoptosis-mediated germ cell loss and also, prominent retinal degeneration with photoreceptor cell apoptosis and mitochondrial oxidative stress. Mice show reduced capacity for adipocyte differentiation and impaired insulin responses.</text>
</comment>
<comment type="similarity">
    <text evidence="15">Belongs to the peptidase C12 family.</text>
</comment>